<name>ASSY_SYNC1</name>
<sequence length="406" mass="45692">MSQKGSVKKAVLAYSGGLDTSIIVRWLIEEYGCEVIAFAADVGQGKELDGIPEKARQTGASKCYVEDLREEFVRDFVFPMFRANAIYEGRYFLGTSIARPLISKKQMEIALAEEAEAVCHGATGKGNDQIRFELAYYHFNPEIKIIAPWREWDLNSRESLIAYANKHGIPVPVTKKRPWSSDRNLLHISFEGGVLEDPWAEPPEDMYLLSVSPEQAPDKPEYVEIEFRNGDPVSINGESLSPAQLLAHLNELGGKHGIGRADIMENRFVGMKSRGVYETPGGTILEEAHRGVEQITMDREVLNLRDSLIPRYATMVYNGFWFAPEREAMQAMIDETQKTVNGVARVKLYKGHCRVVGRKSETNSLFDPEVATFEADEVYNQADAEGFIRLNALRLRIRSAMQKKHG</sequence>
<keyword id="KW-0028">Amino-acid biosynthesis</keyword>
<keyword id="KW-0055">Arginine biosynthesis</keyword>
<keyword id="KW-0067">ATP-binding</keyword>
<keyword id="KW-0963">Cytoplasm</keyword>
<keyword id="KW-0436">Ligase</keyword>
<keyword id="KW-0547">Nucleotide-binding</keyword>
<keyword id="KW-1185">Reference proteome</keyword>
<reference key="1">
    <citation type="submission" date="2005-10" db="EMBL/GenBank/DDBJ databases">
        <title>Complete sequence of Pelobacter carbinolicus DSM 2380.</title>
        <authorList>
            <person name="Copeland A."/>
            <person name="Lucas S."/>
            <person name="Lapidus A."/>
            <person name="Barry K."/>
            <person name="Detter J.C."/>
            <person name="Glavina T."/>
            <person name="Hammon N."/>
            <person name="Israni S."/>
            <person name="Pitluck S."/>
            <person name="Chertkov O."/>
            <person name="Schmutz J."/>
            <person name="Larimer F."/>
            <person name="Land M."/>
            <person name="Kyrpides N."/>
            <person name="Ivanova N."/>
            <person name="Richardson P."/>
        </authorList>
    </citation>
    <scope>NUCLEOTIDE SEQUENCE [LARGE SCALE GENOMIC DNA]</scope>
    <source>
        <strain>DSM 2380 / NBRC 103641 / GraBd1</strain>
    </source>
</reference>
<gene>
    <name evidence="1" type="primary">argG</name>
    <name type="ordered locus">Pcar_2417</name>
</gene>
<proteinExistence type="inferred from homology"/>
<feature type="chain" id="PRO_0000263948" description="Argininosuccinate synthase">
    <location>
        <begin position="1"/>
        <end position="406"/>
    </location>
</feature>
<feature type="binding site" evidence="1">
    <location>
        <begin position="13"/>
        <end position="21"/>
    </location>
    <ligand>
        <name>ATP</name>
        <dbReference type="ChEBI" id="CHEBI:30616"/>
    </ligand>
</feature>
<feature type="binding site" evidence="1">
    <location>
        <position position="40"/>
    </location>
    <ligand>
        <name>ATP</name>
        <dbReference type="ChEBI" id="CHEBI:30616"/>
    </ligand>
</feature>
<feature type="binding site" evidence="1">
    <location>
        <position position="91"/>
    </location>
    <ligand>
        <name>L-citrulline</name>
        <dbReference type="ChEBI" id="CHEBI:57743"/>
    </ligand>
</feature>
<feature type="binding site" evidence="1">
    <location>
        <position position="96"/>
    </location>
    <ligand>
        <name>L-citrulline</name>
        <dbReference type="ChEBI" id="CHEBI:57743"/>
    </ligand>
</feature>
<feature type="binding site" evidence="1">
    <location>
        <position position="121"/>
    </location>
    <ligand>
        <name>ATP</name>
        <dbReference type="ChEBI" id="CHEBI:30616"/>
    </ligand>
</feature>
<feature type="binding site" evidence="1">
    <location>
        <position position="123"/>
    </location>
    <ligand>
        <name>L-aspartate</name>
        <dbReference type="ChEBI" id="CHEBI:29991"/>
    </ligand>
</feature>
<feature type="binding site" evidence="1">
    <location>
        <position position="127"/>
    </location>
    <ligand>
        <name>L-aspartate</name>
        <dbReference type="ChEBI" id="CHEBI:29991"/>
    </ligand>
</feature>
<feature type="binding site" evidence="1">
    <location>
        <position position="127"/>
    </location>
    <ligand>
        <name>L-citrulline</name>
        <dbReference type="ChEBI" id="CHEBI:57743"/>
    </ligand>
</feature>
<feature type="binding site" evidence="1">
    <location>
        <position position="128"/>
    </location>
    <ligand>
        <name>L-aspartate</name>
        <dbReference type="ChEBI" id="CHEBI:29991"/>
    </ligand>
</feature>
<feature type="binding site" evidence="1">
    <location>
        <position position="131"/>
    </location>
    <ligand>
        <name>L-citrulline</name>
        <dbReference type="ChEBI" id="CHEBI:57743"/>
    </ligand>
</feature>
<feature type="binding site" evidence="1">
    <location>
        <position position="180"/>
    </location>
    <ligand>
        <name>L-citrulline</name>
        <dbReference type="ChEBI" id="CHEBI:57743"/>
    </ligand>
</feature>
<feature type="binding site" evidence="1">
    <location>
        <position position="189"/>
    </location>
    <ligand>
        <name>L-citrulline</name>
        <dbReference type="ChEBI" id="CHEBI:57743"/>
    </ligand>
</feature>
<feature type="binding site" evidence="1">
    <location>
        <position position="265"/>
    </location>
    <ligand>
        <name>L-citrulline</name>
        <dbReference type="ChEBI" id="CHEBI:57743"/>
    </ligand>
</feature>
<feature type="binding site" evidence="1">
    <location>
        <position position="277"/>
    </location>
    <ligand>
        <name>L-citrulline</name>
        <dbReference type="ChEBI" id="CHEBI:57743"/>
    </ligand>
</feature>
<dbReference type="EC" id="6.3.4.5" evidence="1"/>
<dbReference type="EMBL" id="CP000142">
    <property type="protein sequence ID" value="ABA89656.1"/>
    <property type="molecule type" value="Genomic_DNA"/>
</dbReference>
<dbReference type="RefSeq" id="WP_011342182.1">
    <property type="nucleotide sequence ID" value="NC_007498.2"/>
</dbReference>
<dbReference type="SMR" id="Q3A1V1"/>
<dbReference type="STRING" id="338963.Pcar_2417"/>
<dbReference type="KEGG" id="pca:Pcar_2417"/>
<dbReference type="eggNOG" id="COG0137">
    <property type="taxonomic scope" value="Bacteria"/>
</dbReference>
<dbReference type="HOGENOM" id="CLU_032784_4_2_7"/>
<dbReference type="OrthoDB" id="9801641at2"/>
<dbReference type="UniPathway" id="UPA00068">
    <property type="reaction ID" value="UER00113"/>
</dbReference>
<dbReference type="Proteomes" id="UP000002534">
    <property type="component" value="Chromosome"/>
</dbReference>
<dbReference type="GO" id="GO:0005737">
    <property type="term" value="C:cytoplasm"/>
    <property type="evidence" value="ECO:0007669"/>
    <property type="project" value="UniProtKB-SubCell"/>
</dbReference>
<dbReference type="GO" id="GO:0004055">
    <property type="term" value="F:argininosuccinate synthase activity"/>
    <property type="evidence" value="ECO:0007669"/>
    <property type="project" value="UniProtKB-UniRule"/>
</dbReference>
<dbReference type="GO" id="GO:0005524">
    <property type="term" value="F:ATP binding"/>
    <property type="evidence" value="ECO:0007669"/>
    <property type="project" value="UniProtKB-UniRule"/>
</dbReference>
<dbReference type="GO" id="GO:0000053">
    <property type="term" value="P:argininosuccinate metabolic process"/>
    <property type="evidence" value="ECO:0007669"/>
    <property type="project" value="TreeGrafter"/>
</dbReference>
<dbReference type="GO" id="GO:0006526">
    <property type="term" value="P:L-arginine biosynthetic process"/>
    <property type="evidence" value="ECO:0007669"/>
    <property type="project" value="UniProtKB-UniRule"/>
</dbReference>
<dbReference type="GO" id="GO:0000050">
    <property type="term" value="P:urea cycle"/>
    <property type="evidence" value="ECO:0007669"/>
    <property type="project" value="TreeGrafter"/>
</dbReference>
<dbReference type="CDD" id="cd01999">
    <property type="entry name" value="ASS"/>
    <property type="match status" value="1"/>
</dbReference>
<dbReference type="FunFam" id="3.40.50.620:FF:000019">
    <property type="entry name" value="Argininosuccinate synthase"/>
    <property type="match status" value="1"/>
</dbReference>
<dbReference type="FunFam" id="3.90.1260.10:FF:000007">
    <property type="entry name" value="Argininosuccinate synthase"/>
    <property type="match status" value="1"/>
</dbReference>
<dbReference type="Gene3D" id="3.90.1260.10">
    <property type="entry name" value="Argininosuccinate synthetase, chain A, domain 2"/>
    <property type="match status" value="1"/>
</dbReference>
<dbReference type="Gene3D" id="3.40.50.620">
    <property type="entry name" value="HUPs"/>
    <property type="match status" value="1"/>
</dbReference>
<dbReference type="Gene3D" id="1.20.5.470">
    <property type="entry name" value="Single helix bin"/>
    <property type="match status" value="1"/>
</dbReference>
<dbReference type="HAMAP" id="MF_00005">
    <property type="entry name" value="Arg_succ_synth_type1"/>
    <property type="match status" value="1"/>
</dbReference>
<dbReference type="InterPro" id="IPR048268">
    <property type="entry name" value="Arginosuc_syn_C"/>
</dbReference>
<dbReference type="InterPro" id="IPR048267">
    <property type="entry name" value="Arginosuc_syn_N"/>
</dbReference>
<dbReference type="InterPro" id="IPR001518">
    <property type="entry name" value="Arginosuc_synth"/>
</dbReference>
<dbReference type="InterPro" id="IPR018223">
    <property type="entry name" value="Arginosuc_synth_CS"/>
</dbReference>
<dbReference type="InterPro" id="IPR023434">
    <property type="entry name" value="Arginosuc_synth_type_1_subfam"/>
</dbReference>
<dbReference type="InterPro" id="IPR024074">
    <property type="entry name" value="AS_cat/multimer_dom_body"/>
</dbReference>
<dbReference type="InterPro" id="IPR014729">
    <property type="entry name" value="Rossmann-like_a/b/a_fold"/>
</dbReference>
<dbReference type="NCBIfam" id="TIGR00032">
    <property type="entry name" value="argG"/>
    <property type="match status" value="1"/>
</dbReference>
<dbReference type="NCBIfam" id="NF001770">
    <property type="entry name" value="PRK00509.1"/>
    <property type="match status" value="1"/>
</dbReference>
<dbReference type="PANTHER" id="PTHR11587">
    <property type="entry name" value="ARGININOSUCCINATE SYNTHASE"/>
    <property type="match status" value="1"/>
</dbReference>
<dbReference type="PANTHER" id="PTHR11587:SF2">
    <property type="entry name" value="ARGININOSUCCINATE SYNTHASE"/>
    <property type="match status" value="1"/>
</dbReference>
<dbReference type="Pfam" id="PF20979">
    <property type="entry name" value="Arginosuc_syn_C"/>
    <property type="match status" value="1"/>
</dbReference>
<dbReference type="Pfam" id="PF00764">
    <property type="entry name" value="Arginosuc_synth"/>
    <property type="match status" value="1"/>
</dbReference>
<dbReference type="SUPFAM" id="SSF52402">
    <property type="entry name" value="Adenine nucleotide alpha hydrolases-like"/>
    <property type="match status" value="1"/>
</dbReference>
<dbReference type="SUPFAM" id="SSF69864">
    <property type="entry name" value="Argininosuccinate synthetase, C-terminal domain"/>
    <property type="match status" value="1"/>
</dbReference>
<dbReference type="PROSITE" id="PS00564">
    <property type="entry name" value="ARGININOSUCCIN_SYN_1"/>
    <property type="match status" value="1"/>
</dbReference>
<dbReference type="PROSITE" id="PS00565">
    <property type="entry name" value="ARGININOSUCCIN_SYN_2"/>
    <property type="match status" value="1"/>
</dbReference>
<accession>Q3A1V1</accession>
<protein>
    <recommendedName>
        <fullName evidence="1">Argininosuccinate synthase</fullName>
        <ecNumber evidence="1">6.3.4.5</ecNumber>
    </recommendedName>
    <alternativeName>
        <fullName evidence="1">Citrulline--aspartate ligase</fullName>
    </alternativeName>
</protein>
<comment type="catalytic activity">
    <reaction evidence="1">
        <text>L-citrulline + L-aspartate + ATP = 2-(N(omega)-L-arginino)succinate + AMP + diphosphate + H(+)</text>
        <dbReference type="Rhea" id="RHEA:10932"/>
        <dbReference type="ChEBI" id="CHEBI:15378"/>
        <dbReference type="ChEBI" id="CHEBI:29991"/>
        <dbReference type="ChEBI" id="CHEBI:30616"/>
        <dbReference type="ChEBI" id="CHEBI:33019"/>
        <dbReference type="ChEBI" id="CHEBI:57472"/>
        <dbReference type="ChEBI" id="CHEBI:57743"/>
        <dbReference type="ChEBI" id="CHEBI:456215"/>
        <dbReference type="EC" id="6.3.4.5"/>
    </reaction>
</comment>
<comment type="pathway">
    <text evidence="1">Amino-acid biosynthesis; L-arginine biosynthesis; L-arginine from L-ornithine and carbamoyl phosphate: step 2/3.</text>
</comment>
<comment type="subunit">
    <text evidence="1">Homotetramer.</text>
</comment>
<comment type="subcellular location">
    <subcellularLocation>
        <location evidence="1">Cytoplasm</location>
    </subcellularLocation>
</comment>
<comment type="similarity">
    <text evidence="1">Belongs to the argininosuccinate synthase family. Type 1 subfamily.</text>
</comment>
<organism>
    <name type="scientific">Syntrophotalea carbinolica (strain DSM 2380 / NBRC 103641 / GraBd1)</name>
    <name type="common">Pelobacter carbinolicus</name>
    <dbReference type="NCBI Taxonomy" id="338963"/>
    <lineage>
        <taxon>Bacteria</taxon>
        <taxon>Pseudomonadati</taxon>
        <taxon>Thermodesulfobacteriota</taxon>
        <taxon>Desulfuromonadia</taxon>
        <taxon>Desulfuromonadales</taxon>
        <taxon>Syntrophotaleaceae</taxon>
        <taxon>Syntrophotalea</taxon>
    </lineage>
</organism>
<evidence type="ECO:0000255" key="1">
    <source>
        <dbReference type="HAMAP-Rule" id="MF_00005"/>
    </source>
</evidence>